<keyword id="KW-0175">Coiled coil</keyword>
<keyword id="KW-0597">Phosphoprotein</keyword>
<keyword id="KW-1185">Reference proteome</keyword>
<dbReference type="EMBL" id="AJ719498">
    <property type="protein sequence ID" value="CAG31157.1"/>
    <property type="molecule type" value="mRNA"/>
</dbReference>
<dbReference type="RefSeq" id="NP_001026486.1">
    <property type="nucleotide sequence ID" value="NM_001031315.1"/>
</dbReference>
<dbReference type="SMR" id="Q5ZM86"/>
<dbReference type="FunCoup" id="Q5ZM86">
    <property type="interactions" value="105"/>
</dbReference>
<dbReference type="PaxDb" id="9031-ENSGALP00000032727"/>
<dbReference type="GeneID" id="424906"/>
<dbReference type="KEGG" id="gga:424906"/>
<dbReference type="CTD" id="152137"/>
<dbReference type="VEuPathDB" id="HostDB:geneid_424906"/>
<dbReference type="eggNOG" id="ENOG502S0GI">
    <property type="taxonomic scope" value="Eukaryota"/>
</dbReference>
<dbReference type="InParanoid" id="Q5ZM86"/>
<dbReference type="OrthoDB" id="9994767at2759"/>
<dbReference type="PhylomeDB" id="Q5ZM86"/>
<dbReference type="PRO" id="PR:Q5ZM86"/>
<dbReference type="Proteomes" id="UP000000539">
    <property type="component" value="Unassembled WGS sequence"/>
</dbReference>
<dbReference type="GO" id="GO:0005737">
    <property type="term" value="C:cytoplasm"/>
    <property type="evidence" value="ECO:0000318"/>
    <property type="project" value="GO_Central"/>
</dbReference>
<dbReference type="GO" id="GO:0031625">
    <property type="term" value="F:ubiquitin protein ligase binding"/>
    <property type="evidence" value="ECO:0000318"/>
    <property type="project" value="GO_Central"/>
</dbReference>
<dbReference type="InterPro" id="IPR039303">
    <property type="entry name" value="CCDC50"/>
</dbReference>
<dbReference type="InterPro" id="IPR029311">
    <property type="entry name" value="CCDC50_N"/>
</dbReference>
<dbReference type="PANTHER" id="PTHR22115">
    <property type="entry name" value="C3ORF6 PROTEIN-RELATED"/>
    <property type="match status" value="1"/>
</dbReference>
<dbReference type="PANTHER" id="PTHR22115:SF1">
    <property type="entry name" value="COILED-COIL DOMAIN-CONTAINING PROTEIN 50"/>
    <property type="match status" value="1"/>
</dbReference>
<dbReference type="Pfam" id="PF15295">
    <property type="entry name" value="CCDC50_N"/>
    <property type="match status" value="2"/>
</dbReference>
<evidence type="ECO:0000250" key="1"/>
<evidence type="ECO:0000255" key="2"/>
<evidence type="ECO:0000256" key="3">
    <source>
        <dbReference type="SAM" id="MobiDB-lite"/>
    </source>
</evidence>
<feature type="chain" id="PRO_0000066306" description="Coiled-coil domain-containing protein 50">
    <location>
        <begin position="1"/>
        <end position="301"/>
    </location>
</feature>
<feature type="region of interest" description="Disordered" evidence="3">
    <location>
        <begin position="123"/>
        <end position="175"/>
    </location>
</feature>
<feature type="region of interest" description="Disordered" evidence="3">
    <location>
        <begin position="214"/>
        <end position="301"/>
    </location>
</feature>
<feature type="coiled-coil region" evidence="2">
    <location>
        <begin position="57"/>
        <end position="131"/>
    </location>
</feature>
<feature type="compositionally biased region" description="Basic and acidic residues" evidence="3">
    <location>
        <begin position="123"/>
        <end position="142"/>
    </location>
</feature>
<feature type="compositionally biased region" description="Basic and acidic residues" evidence="3">
    <location>
        <begin position="161"/>
        <end position="175"/>
    </location>
</feature>
<feature type="compositionally biased region" description="Basic and acidic residues" evidence="3">
    <location>
        <begin position="214"/>
        <end position="262"/>
    </location>
</feature>
<proteinExistence type="evidence at transcript level"/>
<sequence>MAEIGIDQSKLPGVKEVCRDFAVLEDHTLAHNLQEQEIEHHLATNIQRNRLVQHDLQVAKQLQEEEDLKARAQIQKRQKDLERQDSEIAQEIQVKLVFEAEQRRRQEEKDEDIARLLQQKELQEEKKRKKHYPESQEHKVYEDSYYSENGGTKLRGTKQTVYDKPRREQELSDAEIARKLQEEELLANQADQMAAQVAQDEEIARLLMAEEKKAFKKGKEKEKSSFERKRNDQDWKHDASESPRSRSKEGPETQRHKGDKSSRSQPLLDDFEHARYYTSQPSPLRQFSKPEHSPKGSRRKQ</sequence>
<gene>
    <name type="primary">CCDC50</name>
    <name type="ORF">RCJMB04_2n23</name>
</gene>
<name>CCD50_CHICK</name>
<comment type="function">
    <text evidence="1">Involved in EGFR signaling.</text>
</comment>
<comment type="PTM">
    <text evidence="1">Phosphorylated on tyrosine residues.</text>
</comment>
<reference key="1">
    <citation type="journal article" date="2005" name="Genome Biol.">
        <title>Full-length cDNAs from chicken bursal lymphocytes to facilitate gene function analysis.</title>
        <authorList>
            <person name="Caldwell R.B."/>
            <person name="Kierzek A.M."/>
            <person name="Arakawa H."/>
            <person name="Bezzubov Y."/>
            <person name="Zaim J."/>
            <person name="Fiedler P."/>
            <person name="Kutter S."/>
            <person name="Blagodatski A."/>
            <person name="Kostovska D."/>
            <person name="Koter M."/>
            <person name="Plachy J."/>
            <person name="Carninci P."/>
            <person name="Hayashizaki Y."/>
            <person name="Buerstedde J.-M."/>
        </authorList>
    </citation>
    <scope>NUCLEOTIDE SEQUENCE [LARGE SCALE MRNA]</scope>
    <source>
        <strain>CB</strain>
        <tissue>Bursa of Fabricius</tissue>
    </source>
</reference>
<protein>
    <recommendedName>
        <fullName>Coiled-coil domain-containing protein 50</fullName>
    </recommendedName>
</protein>
<accession>Q5ZM86</accession>
<organism>
    <name type="scientific">Gallus gallus</name>
    <name type="common">Chicken</name>
    <dbReference type="NCBI Taxonomy" id="9031"/>
    <lineage>
        <taxon>Eukaryota</taxon>
        <taxon>Metazoa</taxon>
        <taxon>Chordata</taxon>
        <taxon>Craniata</taxon>
        <taxon>Vertebrata</taxon>
        <taxon>Euteleostomi</taxon>
        <taxon>Archelosauria</taxon>
        <taxon>Archosauria</taxon>
        <taxon>Dinosauria</taxon>
        <taxon>Saurischia</taxon>
        <taxon>Theropoda</taxon>
        <taxon>Coelurosauria</taxon>
        <taxon>Aves</taxon>
        <taxon>Neognathae</taxon>
        <taxon>Galloanserae</taxon>
        <taxon>Galliformes</taxon>
        <taxon>Phasianidae</taxon>
        <taxon>Phasianinae</taxon>
        <taxon>Gallus</taxon>
    </lineage>
</organism>